<name>FENR3_LYSSC</name>
<protein>
    <recommendedName>
        <fullName evidence="1">Ferredoxin--NADP reductase 3</fullName>
        <shortName evidence="1">FNR 3</shortName>
        <shortName evidence="1">Fd-NADP(+) reductase 3</shortName>
        <ecNumber evidence="1">1.18.1.2</ecNumber>
    </recommendedName>
</protein>
<proteinExistence type="inferred from homology"/>
<dbReference type="EC" id="1.18.1.2" evidence="1"/>
<dbReference type="EMBL" id="CP000817">
    <property type="protein sequence ID" value="ACA39883.1"/>
    <property type="molecule type" value="Genomic_DNA"/>
</dbReference>
<dbReference type="RefSeq" id="WP_012293971.1">
    <property type="nucleotide sequence ID" value="NC_010382.1"/>
</dbReference>
<dbReference type="SMR" id="B1HW35"/>
<dbReference type="EnsemblBacteria" id="ACA39883">
    <property type="protein sequence ID" value="ACA39883"/>
    <property type="gene ID" value="Bsph_2322"/>
</dbReference>
<dbReference type="KEGG" id="lsp:Bsph_2322"/>
<dbReference type="HOGENOM" id="CLU_031864_5_5_9"/>
<dbReference type="Proteomes" id="UP000002164">
    <property type="component" value="Chromosome"/>
</dbReference>
<dbReference type="GO" id="GO:0004324">
    <property type="term" value="F:ferredoxin-NADP+ reductase activity"/>
    <property type="evidence" value="ECO:0007669"/>
    <property type="project" value="UniProtKB-UniRule"/>
</dbReference>
<dbReference type="GO" id="GO:0050660">
    <property type="term" value="F:flavin adenine dinucleotide binding"/>
    <property type="evidence" value="ECO:0007669"/>
    <property type="project" value="UniProtKB-UniRule"/>
</dbReference>
<dbReference type="GO" id="GO:0050661">
    <property type="term" value="F:NADP binding"/>
    <property type="evidence" value="ECO:0007669"/>
    <property type="project" value="UniProtKB-UniRule"/>
</dbReference>
<dbReference type="Gene3D" id="3.50.50.60">
    <property type="entry name" value="FAD/NAD(P)-binding domain"/>
    <property type="match status" value="2"/>
</dbReference>
<dbReference type="HAMAP" id="MF_01685">
    <property type="entry name" value="FENR2"/>
    <property type="match status" value="1"/>
</dbReference>
<dbReference type="InterPro" id="IPR036188">
    <property type="entry name" value="FAD/NAD-bd_sf"/>
</dbReference>
<dbReference type="InterPro" id="IPR023753">
    <property type="entry name" value="FAD/NAD-binding_dom"/>
</dbReference>
<dbReference type="InterPro" id="IPR022890">
    <property type="entry name" value="Fd--NADP_Rdtase_type_2"/>
</dbReference>
<dbReference type="InterPro" id="IPR050097">
    <property type="entry name" value="Ferredoxin-NADP_redctase_2"/>
</dbReference>
<dbReference type="PANTHER" id="PTHR48105">
    <property type="entry name" value="THIOREDOXIN REDUCTASE 1-RELATED-RELATED"/>
    <property type="match status" value="1"/>
</dbReference>
<dbReference type="Pfam" id="PF07992">
    <property type="entry name" value="Pyr_redox_2"/>
    <property type="match status" value="1"/>
</dbReference>
<dbReference type="PRINTS" id="PR00368">
    <property type="entry name" value="FADPNR"/>
</dbReference>
<dbReference type="PRINTS" id="PR00469">
    <property type="entry name" value="PNDRDTASEII"/>
</dbReference>
<dbReference type="SUPFAM" id="SSF51905">
    <property type="entry name" value="FAD/NAD(P)-binding domain"/>
    <property type="match status" value="1"/>
</dbReference>
<organism>
    <name type="scientific">Lysinibacillus sphaericus (strain C3-41)</name>
    <dbReference type="NCBI Taxonomy" id="444177"/>
    <lineage>
        <taxon>Bacteria</taxon>
        <taxon>Bacillati</taxon>
        <taxon>Bacillota</taxon>
        <taxon>Bacilli</taxon>
        <taxon>Bacillales</taxon>
        <taxon>Bacillaceae</taxon>
        <taxon>Lysinibacillus</taxon>
    </lineage>
</organism>
<accession>B1HW35</accession>
<reference key="1">
    <citation type="journal article" date="2008" name="J. Bacteriol.">
        <title>Complete genome sequence of the mosquitocidal bacterium Bacillus sphaericus C3-41 and comparison with those of closely related Bacillus species.</title>
        <authorList>
            <person name="Hu X."/>
            <person name="Fan W."/>
            <person name="Han B."/>
            <person name="Liu H."/>
            <person name="Zheng D."/>
            <person name="Li Q."/>
            <person name="Dong W."/>
            <person name="Yan J."/>
            <person name="Gao M."/>
            <person name="Berry C."/>
            <person name="Yuan Z."/>
        </authorList>
    </citation>
    <scope>NUCLEOTIDE SEQUENCE [LARGE SCALE GENOMIC DNA]</scope>
    <source>
        <strain>C3-41</strain>
    </source>
</reference>
<feature type="chain" id="PRO_0000364879" description="Ferredoxin--NADP reductase 3">
    <location>
        <begin position="1"/>
        <end position="349"/>
    </location>
</feature>
<feature type="binding site" evidence="1">
    <location>
        <position position="34"/>
    </location>
    <ligand>
        <name>FAD</name>
        <dbReference type="ChEBI" id="CHEBI:57692"/>
    </ligand>
</feature>
<feature type="binding site" evidence="1">
    <location>
        <position position="42"/>
    </location>
    <ligand>
        <name>FAD</name>
        <dbReference type="ChEBI" id="CHEBI:57692"/>
    </ligand>
</feature>
<feature type="binding site" evidence="1">
    <location>
        <position position="46"/>
    </location>
    <ligand>
        <name>FAD</name>
        <dbReference type="ChEBI" id="CHEBI:57692"/>
    </ligand>
</feature>
<feature type="binding site" evidence="1">
    <location>
        <position position="86"/>
    </location>
    <ligand>
        <name>FAD</name>
        <dbReference type="ChEBI" id="CHEBI:57692"/>
    </ligand>
</feature>
<feature type="binding site" evidence="1">
    <location>
        <position position="120"/>
    </location>
    <ligand>
        <name>FAD</name>
        <dbReference type="ChEBI" id="CHEBI:57692"/>
    </ligand>
</feature>
<feature type="binding site" evidence="1">
    <location>
        <position position="287"/>
    </location>
    <ligand>
        <name>FAD</name>
        <dbReference type="ChEBI" id="CHEBI:57692"/>
    </ligand>
</feature>
<feature type="binding site" evidence="1">
    <location>
        <position position="328"/>
    </location>
    <ligand>
        <name>FAD</name>
        <dbReference type="ChEBI" id="CHEBI:57692"/>
    </ligand>
</feature>
<gene>
    <name type="ordered locus">Bsph_2322</name>
</gene>
<sequence>MQHVYDVTIIGGGPAGLYSAFYSGLRGLKTKLIESQSQLGGKVLLYPEKLIWDIGGQPPILGEKFVKQLIQQAKTFDPTILTNTKVDFIERQEHLFIVHTATGERHYSKTVLLAVGGGIINPQKLTLEGAEKYEMSNLHYTVQSYKRFVNRDILISGGGNAAIDWAVELSPLAKSVTVVYRKDTLSAHEATVKEAIDAGVLIECNTTITKLLANDDKTAIQLVRCENSKTKESYTRQIDEVIISHGYNCEASLTFDEAISIPKKDDYYFEGKATGETAQPGIFAAGDILSFEGKINLLLGTFQDAANAVNSIKTYLEPTAYRHGMVSSHNELFKEKNRSIIEKELVPSH</sequence>
<keyword id="KW-0274">FAD</keyword>
<keyword id="KW-0285">Flavoprotein</keyword>
<keyword id="KW-0521">NADP</keyword>
<keyword id="KW-0560">Oxidoreductase</keyword>
<comment type="catalytic activity">
    <reaction evidence="1">
        <text>2 reduced [2Fe-2S]-[ferredoxin] + NADP(+) + H(+) = 2 oxidized [2Fe-2S]-[ferredoxin] + NADPH</text>
        <dbReference type="Rhea" id="RHEA:20125"/>
        <dbReference type="Rhea" id="RHEA-COMP:10000"/>
        <dbReference type="Rhea" id="RHEA-COMP:10001"/>
        <dbReference type="ChEBI" id="CHEBI:15378"/>
        <dbReference type="ChEBI" id="CHEBI:33737"/>
        <dbReference type="ChEBI" id="CHEBI:33738"/>
        <dbReference type="ChEBI" id="CHEBI:57783"/>
        <dbReference type="ChEBI" id="CHEBI:58349"/>
        <dbReference type="EC" id="1.18.1.2"/>
    </reaction>
</comment>
<comment type="cofactor">
    <cofactor evidence="1">
        <name>FAD</name>
        <dbReference type="ChEBI" id="CHEBI:57692"/>
    </cofactor>
    <text evidence="1">Binds 1 FAD per subunit.</text>
</comment>
<comment type="subunit">
    <text evidence="1">Homodimer.</text>
</comment>
<comment type="similarity">
    <text evidence="1">Belongs to the ferredoxin--NADP reductase type 2 family.</text>
</comment>
<evidence type="ECO:0000255" key="1">
    <source>
        <dbReference type="HAMAP-Rule" id="MF_01685"/>
    </source>
</evidence>